<dbReference type="EMBL" id="AB050464">
    <property type="protein sequence ID" value="BAB17222.1"/>
    <property type="molecule type" value="mRNA"/>
</dbReference>
<dbReference type="SMR" id="Q9DG99"/>
<dbReference type="GO" id="GO:0016538">
    <property type="term" value="F:cyclin-dependent protein serine/threonine kinase regulator activity"/>
    <property type="evidence" value="ECO:0007669"/>
    <property type="project" value="InterPro"/>
</dbReference>
<dbReference type="GO" id="GO:0051301">
    <property type="term" value="P:cell division"/>
    <property type="evidence" value="ECO:0007669"/>
    <property type="project" value="UniProtKB-KW"/>
</dbReference>
<dbReference type="GO" id="GO:0044772">
    <property type="term" value="P:mitotic cell cycle phase transition"/>
    <property type="evidence" value="ECO:0007669"/>
    <property type="project" value="InterPro"/>
</dbReference>
<dbReference type="CDD" id="cd20507">
    <property type="entry name" value="CYCLIN_CCNB1-like_rpt1"/>
    <property type="match status" value="1"/>
</dbReference>
<dbReference type="CDD" id="cd20570">
    <property type="entry name" value="CYCLIN_CCNB2_rpt2"/>
    <property type="match status" value="1"/>
</dbReference>
<dbReference type="FunFam" id="1.10.472.10:FF:000005">
    <property type="entry name" value="G2/mitotic-specific cyclin B"/>
    <property type="match status" value="1"/>
</dbReference>
<dbReference type="FunFam" id="1.10.472.10:FF:000198">
    <property type="entry name" value="G2/mitotic-specific cyclin-B1"/>
    <property type="match status" value="1"/>
</dbReference>
<dbReference type="Gene3D" id="1.10.472.10">
    <property type="entry name" value="Cyclin-like"/>
    <property type="match status" value="2"/>
</dbReference>
<dbReference type="InterPro" id="IPR039361">
    <property type="entry name" value="Cyclin"/>
</dbReference>
<dbReference type="InterPro" id="IPR013763">
    <property type="entry name" value="Cyclin-like_dom"/>
</dbReference>
<dbReference type="InterPro" id="IPR036915">
    <property type="entry name" value="Cyclin-like_sf"/>
</dbReference>
<dbReference type="InterPro" id="IPR046965">
    <property type="entry name" value="Cyclin_A/B-like"/>
</dbReference>
<dbReference type="InterPro" id="IPR004367">
    <property type="entry name" value="Cyclin_C-dom"/>
</dbReference>
<dbReference type="InterPro" id="IPR006671">
    <property type="entry name" value="Cyclin_N"/>
</dbReference>
<dbReference type="InterPro" id="IPR048258">
    <property type="entry name" value="Cyclins_cyclin-box"/>
</dbReference>
<dbReference type="PANTHER" id="PTHR10177">
    <property type="entry name" value="CYCLINS"/>
    <property type="match status" value="1"/>
</dbReference>
<dbReference type="Pfam" id="PF02984">
    <property type="entry name" value="Cyclin_C"/>
    <property type="match status" value="1"/>
</dbReference>
<dbReference type="Pfam" id="PF00134">
    <property type="entry name" value="Cyclin_N"/>
    <property type="match status" value="1"/>
</dbReference>
<dbReference type="PIRSF" id="PIRSF001771">
    <property type="entry name" value="Cyclin_A_B_D_E"/>
    <property type="match status" value="1"/>
</dbReference>
<dbReference type="SMART" id="SM00385">
    <property type="entry name" value="CYCLIN"/>
    <property type="match status" value="2"/>
</dbReference>
<dbReference type="SMART" id="SM01332">
    <property type="entry name" value="Cyclin_C"/>
    <property type="match status" value="1"/>
</dbReference>
<dbReference type="SUPFAM" id="SSF47954">
    <property type="entry name" value="Cyclin-like"/>
    <property type="match status" value="2"/>
</dbReference>
<dbReference type="PROSITE" id="PS00292">
    <property type="entry name" value="CYCLINS"/>
    <property type="match status" value="1"/>
</dbReference>
<organism>
    <name type="scientific">Oryzias javanicus</name>
    <name type="common">Javanese ricefish</name>
    <name type="synonym">Aplocheilus javanicus</name>
    <dbReference type="NCBI Taxonomy" id="123683"/>
    <lineage>
        <taxon>Eukaryota</taxon>
        <taxon>Metazoa</taxon>
        <taxon>Chordata</taxon>
        <taxon>Craniata</taxon>
        <taxon>Vertebrata</taxon>
        <taxon>Euteleostomi</taxon>
        <taxon>Actinopterygii</taxon>
        <taxon>Neopterygii</taxon>
        <taxon>Teleostei</taxon>
        <taxon>Neoteleostei</taxon>
        <taxon>Acanthomorphata</taxon>
        <taxon>Ovalentaria</taxon>
        <taxon>Atherinomorphae</taxon>
        <taxon>Beloniformes</taxon>
        <taxon>Adrianichthyidae</taxon>
        <taxon>Oryziinae</taxon>
        <taxon>Oryzias</taxon>
    </lineage>
</organism>
<proteinExistence type="evidence at transcript level"/>
<reference key="1">
    <citation type="submission" date="2000-10" db="EMBL/GenBank/DDBJ databases">
        <title>cDNA cloning of Cdc2 and cyclin B in medaka species.</title>
        <authorList>
            <person name="Yamashita M."/>
            <person name="Mita K."/>
        </authorList>
    </citation>
    <scope>NUCLEOTIDE SEQUENCE [MRNA]</scope>
    <source>
        <tissue>Ovary</tissue>
    </source>
</reference>
<accession>Q9DG99</accession>
<protein>
    <recommendedName>
        <fullName>G2/mitotic-specific cyclin-B2</fullName>
    </recommendedName>
</protein>
<keyword id="KW-0131">Cell cycle</keyword>
<keyword id="KW-0132">Cell division</keyword>
<keyword id="KW-0195">Cyclin</keyword>
<keyword id="KW-0498">Mitosis</keyword>
<evidence type="ECO:0000250" key="1"/>
<evidence type="ECO:0000256" key="2">
    <source>
        <dbReference type="SAM" id="MobiDB-lite"/>
    </source>
</evidence>
<evidence type="ECO:0000305" key="3"/>
<gene>
    <name type="primary">ccnb2</name>
</gene>
<sequence>MSSVEAVTQQQLLAAENPVRMGKGAADPRRAALGEITNRNAAAAANRKMGPSKKQPKPSCAQKPQPVVHTSAGDPAPISADMSMKVEQDLSQAFSEVLMLAVQDVDEQDADQPQLCSQYVKDIYKYLHTLEEQQAIRPNYMQGYSVTEHMRALLVDWLVQVHSRFQLLQETLYLTVAILDRFLQVHPVSRRKLQLVGVTAMLVACKYEEMYPPEVGDFAYITDDAFTKFQIVEMEQVILRSLGFQLGRPLPLHFLRRASKVADADVEKHTLAKYLLELTLLDYHMVHYRPSEAAAAALCLSQLLLDGLPWSLEQQHYSTYDEQHLKPIMQLMAKNVVQVTEGRTKFLAVKKKYSSSKLMKISLIPQLNSSTIKVMAEALQNP</sequence>
<name>CCNB2_ORYJA</name>
<feature type="chain" id="PRO_0000080367" description="G2/mitotic-specific cyclin-B2">
    <location>
        <begin position="1"/>
        <end position="382"/>
    </location>
</feature>
<feature type="region of interest" description="Disordered" evidence="2">
    <location>
        <begin position="1"/>
        <end position="78"/>
    </location>
</feature>
<feature type="compositionally biased region" description="Polar residues" evidence="2">
    <location>
        <begin position="1"/>
        <end position="12"/>
    </location>
</feature>
<feature type="compositionally biased region" description="Low complexity" evidence="2">
    <location>
        <begin position="38"/>
        <end position="47"/>
    </location>
</feature>
<comment type="function">
    <text evidence="1">Essential for the control of the cell cycle at the G2/M (mitosis) transition.</text>
</comment>
<comment type="subunit">
    <text evidence="1">Interacts with the CDK1 protein kinase to form a serine/threonine kinase holoenzyme complex also known as maturation promoting factor (MPF). The cyclin subunit imparts substrate specificity to the complex (By similarity).</text>
</comment>
<comment type="developmental stage">
    <text>Accumulates steadily during G2 and is abruptly destroyed at mitosis.</text>
</comment>
<comment type="similarity">
    <text evidence="3">Belongs to the cyclin family. Cyclin AB subfamily.</text>
</comment>